<reference key="1">
    <citation type="journal article" date="2004" name="Nature">
        <title>Genome evolution in yeasts.</title>
        <authorList>
            <person name="Dujon B."/>
            <person name="Sherman D."/>
            <person name="Fischer G."/>
            <person name="Durrens P."/>
            <person name="Casaregola S."/>
            <person name="Lafontaine I."/>
            <person name="de Montigny J."/>
            <person name="Marck C."/>
            <person name="Neuveglise C."/>
            <person name="Talla E."/>
            <person name="Goffard N."/>
            <person name="Frangeul L."/>
            <person name="Aigle M."/>
            <person name="Anthouard V."/>
            <person name="Babour A."/>
            <person name="Barbe V."/>
            <person name="Barnay S."/>
            <person name="Blanchin S."/>
            <person name="Beckerich J.-M."/>
            <person name="Beyne E."/>
            <person name="Bleykasten C."/>
            <person name="Boisrame A."/>
            <person name="Boyer J."/>
            <person name="Cattolico L."/>
            <person name="Confanioleri F."/>
            <person name="de Daruvar A."/>
            <person name="Despons L."/>
            <person name="Fabre E."/>
            <person name="Fairhead C."/>
            <person name="Ferry-Dumazet H."/>
            <person name="Groppi A."/>
            <person name="Hantraye F."/>
            <person name="Hennequin C."/>
            <person name="Jauniaux N."/>
            <person name="Joyet P."/>
            <person name="Kachouri R."/>
            <person name="Kerrest A."/>
            <person name="Koszul R."/>
            <person name="Lemaire M."/>
            <person name="Lesur I."/>
            <person name="Ma L."/>
            <person name="Muller H."/>
            <person name="Nicaud J.-M."/>
            <person name="Nikolski M."/>
            <person name="Oztas S."/>
            <person name="Ozier-Kalogeropoulos O."/>
            <person name="Pellenz S."/>
            <person name="Potier S."/>
            <person name="Richard G.-F."/>
            <person name="Straub M.-L."/>
            <person name="Suleau A."/>
            <person name="Swennen D."/>
            <person name="Tekaia F."/>
            <person name="Wesolowski-Louvel M."/>
            <person name="Westhof E."/>
            <person name="Wirth B."/>
            <person name="Zeniou-Meyer M."/>
            <person name="Zivanovic Y."/>
            <person name="Bolotin-Fukuhara M."/>
            <person name="Thierry A."/>
            <person name="Bouchier C."/>
            <person name="Caudron B."/>
            <person name="Scarpelli C."/>
            <person name="Gaillardin C."/>
            <person name="Weissenbach J."/>
            <person name="Wincker P."/>
            <person name="Souciet J.-L."/>
        </authorList>
    </citation>
    <scope>NUCLEOTIDE SEQUENCE [LARGE SCALE GENOMIC DNA]</scope>
    <source>
        <strain>ATCC 2001 / BCRC 20586 / JCM 3761 / NBRC 0622 / NRRL Y-65 / CBS 138</strain>
    </source>
</reference>
<keyword id="KW-0963">Cytoplasm</keyword>
<keyword id="KW-1185">Reference proteome</keyword>
<keyword id="KW-0862">Zinc</keyword>
<sequence length="990" mass="111943">MRSFIKSHRKSNSLESDSDIDFKQLKRKNASTSQLSPPRYNTDYYDPVTSSPKTPTHSHTTSDSLPQKHSPGFESLHRLFNNKLFKKASNSSLNSYLANTDSQSRRSSKDQDPLAPSFHVLKTSSNPASQDSELPVIKGVITHTWGNHSKHNDPHVIVLNDPKTSFETLRSSDLEPPPRLTSKTTRSSVSSERSWSTRDHSMSPPLTSINQDIDIPEDMATRSKNTLINKKKMENRQARIHSNDDLIAMRKNSSDTLPQTAEFFASDKLPGDSTPILEIPESPPPVITLEKYNSSLSDAKELSRSKNVRSNRTSVVSMTQSEESRWSNHLMVNSNHNQNKLRDSDDSDYSNAIDEEDDDDADDDDEASQFSFEYSNLSGRTPSVKYYSKPEPKQMVYIDDLYDDEDFDEDMNYYDENEVSEFLQEEMASNKNNINTDTSVLKDLSSPSINDHSNEKPIYKPTIQMRVNKPKVHRYNDLFALSDEDDPSFNDDDEFDEDEEEGGDDNDEEDEIDEEYDQKVSDECGQSIELQSDDIHSDYGVEYYNDFGGDLNLQNDVQKHHINKEQQYISDEEFDDAITDFNMAKHIIEEEVVLDKAEALRYQKDAEPVQSKTSEDVVNYVDEDSNLRINEKLEKGDVTYQKPTLLTEVKNKQFQKKPVASFADIFNLESDSEEDINNEDGLTGLSDVGLDEDDAVSSPILQSPFESQSLAEGLVSPVICTPGKPNIINKQIIPTIKCEPSSPQEKTIENNKSHTASNFKEYGLNHPLPPPARSQALKFHDLNSELDSELPALMSNLYFIDETEEDAYNELNDVTRDEDEYLDEINTVPEDFNFSDTENDNNAAKRMLRRSNKGSFRSTYSFTDKPQGVTTESSPIKNKLEVNNKTVTFFSSPGWSKSPGSEIGMQRSKSPVKPSSGYRPFGQGSKQFPITPSHEPNYSIEEDRIASTDEILESRTPPTTYMAPSPAFIPNYSLSPIQEASSSVTNSPKR</sequence>
<accession>Q6FWW3</accession>
<protein>
    <recommendedName>
        <fullName>Zinc-regulated protein 8</fullName>
    </recommendedName>
</protein>
<dbReference type="EMBL" id="CR380949">
    <property type="protein sequence ID" value="CAG58187.1"/>
    <property type="molecule type" value="Genomic_DNA"/>
</dbReference>
<dbReference type="RefSeq" id="XP_445281.1">
    <property type="nucleotide sequence ID" value="XM_445281.1"/>
</dbReference>
<dbReference type="SMR" id="Q6FWW3"/>
<dbReference type="FunCoup" id="Q6FWW3">
    <property type="interactions" value="69"/>
</dbReference>
<dbReference type="EnsemblFungi" id="CAGL0C02409g-T">
    <property type="protein sequence ID" value="CAGL0C02409g-T-p1"/>
    <property type="gene ID" value="CAGL0C02409g"/>
</dbReference>
<dbReference type="KEGG" id="cgr:2886735"/>
<dbReference type="CGD" id="CAL0127382">
    <property type="gene designation" value="CAGL0C02409g"/>
</dbReference>
<dbReference type="VEuPathDB" id="FungiDB:CAGL0C02409g"/>
<dbReference type="eggNOG" id="ENOG502QSM8">
    <property type="taxonomic scope" value="Eukaryota"/>
</dbReference>
<dbReference type="HOGENOM" id="CLU_301677_0_0_1"/>
<dbReference type="InParanoid" id="Q6FWW3"/>
<dbReference type="OMA" id="QSLKYHD"/>
<dbReference type="Proteomes" id="UP000002428">
    <property type="component" value="Chromosome C"/>
</dbReference>
<dbReference type="GO" id="GO:0005935">
    <property type="term" value="C:cellular bud neck"/>
    <property type="evidence" value="ECO:0007669"/>
    <property type="project" value="UniProtKB-SubCell"/>
</dbReference>
<dbReference type="GO" id="GO:0005934">
    <property type="term" value="C:cellular bud tip"/>
    <property type="evidence" value="ECO:0007669"/>
    <property type="project" value="UniProtKB-SubCell"/>
</dbReference>
<dbReference type="GO" id="GO:0005737">
    <property type="term" value="C:cytoplasm"/>
    <property type="evidence" value="ECO:0007669"/>
    <property type="project" value="UniProtKB-SubCell"/>
</dbReference>
<dbReference type="GO" id="GO:0062040">
    <property type="term" value="C:fungal biofilm matrix"/>
    <property type="evidence" value="ECO:0000314"/>
    <property type="project" value="CGD"/>
</dbReference>
<comment type="function">
    <text evidence="1">Involved in maintenance of polarized growth and daughter-cell-specific transcription.</text>
</comment>
<comment type="subcellular location">
    <subcellularLocation>
        <location evidence="1">Cytoplasm</location>
    </subcellularLocation>
    <subcellularLocation>
        <location evidence="1">Bud</location>
    </subcellularLocation>
    <subcellularLocation>
        <location evidence="1">Bud neck</location>
    </subcellularLocation>
    <subcellularLocation>
        <location evidence="1">Bud tip</location>
    </subcellularLocation>
</comment>
<comment type="similarity">
    <text evidence="3">Belongs to the ZRG8 family.</text>
</comment>
<gene>
    <name type="primary">ZRG8</name>
    <name type="ordered locus">CAGL0C02409g</name>
</gene>
<organism>
    <name type="scientific">Candida glabrata (strain ATCC 2001 / BCRC 20586 / JCM 3761 / NBRC 0622 / NRRL Y-65 / CBS 138)</name>
    <name type="common">Yeast</name>
    <name type="synonym">Nakaseomyces glabratus</name>
    <dbReference type="NCBI Taxonomy" id="284593"/>
    <lineage>
        <taxon>Eukaryota</taxon>
        <taxon>Fungi</taxon>
        <taxon>Dikarya</taxon>
        <taxon>Ascomycota</taxon>
        <taxon>Saccharomycotina</taxon>
        <taxon>Saccharomycetes</taxon>
        <taxon>Saccharomycetales</taxon>
        <taxon>Saccharomycetaceae</taxon>
        <taxon>Nakaseomyces</taxon>
    </lineage>
</organism>
<proteinExistence type="inferred from homology"/>
<feature type="chain" id="PRO_0000333503" description="Zinc-regulated protein 8">
    <location>
        <begin position="1"/>
        <end position="990"/>
    </location>
</feature>
<feature type="region of interest" description="Disordered" evidence="2">
    <location>
        <begin position="1"/>
        <end position="73"/>
    </location>
</feature>
<feature type="region of interest" description="Disordered" evidence="2">
    <location>
        <begin position="97"/>
        <end position="134"/>
    </location>
</feature>
<feature type="region of interest" description="Disordered" evidence="2">
    <location>
        <begin position="168"/>
        <end position="211"/>
    </location>
</feature>
<feature type="region of interest" description="Disordered" evidence="2">
    <location>
        <begin position="297"/>
        <end position="366"/>
    </location>
</feature>
<feature type="region of interest" description="Disordered" evidence="2">
    <location>
        <begin position="480"/>
        <end position="520"/>
    </location>
</feature>
<feature type="region of interest" description="Disordered" evidence="2">
    <location>
        <begin position="856"/>
        <end position="876"/>
    </location>
</feature>
<feature type="region of interest" description="Disordered" evidence="2">
    <location>
        <begin position="893"/>
        <end position="937"/>
    </location>
</feature>
<feature type="region of interest" description="Disordered" evidence="2">
    <location>
        <begin position="955"/>
        <end position="990"/>
    </location>
</feature>
<feature type="compositionally biased region" description="Basic residues" evidence="2">
    <location>
        <begin position="1"/>
        <end position="11"/>
    </location>
</feature>
<feature type="compositionally biased region" description="Low complexity" evidence="2">
    <location>
        <begin position="49"/>
        <end position="64"/>
    </location>
</feature>
<feature type="compositionally biased region" description="Basic and acidic residues" evidence="2">
    <location>
        <begin position="103"/>
        <end position="112"/>
    </location>
</feature>
<feature type="compositionally biased region" description="Polar residues" evidence="2">
    <location>
        <begin position="122"/>
        <end position="132"/>
    </location>
</feature>
<feature type="compositionally biased region" description="Low complexity" evidence="2">
    <location>
        <begin position="180"/>
        <end position="194"/>
    </location>
</feature>
<feature type="compositionally biased region" description="Polar residues" evidence="2">
    <location>
        <begin position="308"/>
        <end position="321"/>
    </location>
</feature>
<feature type="compositionally biased region" description="Acidic residues" evidence="2">
    <location>
        <begin position="345"/>
        <end position="366"/>
    </location>
</feature>
<feature type="compositionally biased region" description="Acidic residues" evidence="2">
    <location>
        <begin position="482"/>
        <end position="516"/>
    </location>
</feature>
<feature type="compositionally biased region" description="Polar residues" evidence="2">
    <location>
        <begin position="924"/>
        <end position="936"/>
    </location>
</feature>
<feature type="compositionally biased region" description="Polar residues" evidence="2">
    <location>
        <begin position="972"/>
        <end position="990"/>
    </location>
</feature>
<evidence type="ECO:0000250" key="1"/>
<evidence type="ECO:0000256" key="2">
    <source>
        <dbReference type="SAM" id="MobiDB-lite"/>
    </source>
</evidence>
<evidence type="ECO:0000305" key="3"/>
<name>ZRG8_CANGA</name>